<feature type="chain" id="PRO_0000221756" description="Early E3 20.5 kDa glycoprotein">
    <location>
        <begin position="1"/>
        <end position="189"/>
    </location>
</feature>
<feature type="glycosylation site" description="N-linked (GlcNAc...) asparagine; by host" evidence="1">
    <location>
        <position position="73"/>
    </location>
</feature>
<feature type="glycosylation site" description="N-linked (GlcNAc...) asparagine; by host" evidence="1">
    <location>
        <position position="137"/>
    </location>
</feature>
<reference key="1">
    <citation type="journal article" date="1986" name="Gene">
        <title>Region E3 of human adenoviruses; differences between the oncogenic adenovirus-3 and the non-oncogenic adenovirus-2.</title>
        <authorList>
            <person name="Signaes C."/>
            <person name="Akusjaervi G."/>
            <person name="Pettersson U."/>
        </authorList>
    </citation>
    <scope>NUCLEOTIDE SEQUENCE [GENOMIC DNA]</scope>
</reference>
<proteinExistence type="inferred from homology"/>
<sequence length="189" mass="20532">MISTTIFIITSLAAVTYGRSHLTVPVGSTCTLQGPQEGYVTWWRIYDNGGFARPCDQPGTKFSCNGRDLTIINITSNEQGFYYGTNYKNSLDYNIIVVPATTSAPRKSTFSSSSAKASTIPKTASAMLKLPKIALSNSTAAPNTIPKSTIGIITAVVVGLMIIFLCIMYYACCYRKHEQKGDALLNFDI</sequence>
<organism>
    <name type="scientific">Human adenovirus B serotype 3</name>
    <name type="common">HAdV-3</name>
    <name type="synonym">Human adenovirus 3</name>
    <dbReference type="NCBI Taxonomy" id="45659"/>
    <lineage>
        <taxon>Viruses</taxon>
        <taxon>Varidnaviria</taxon>
        <taxon>Bamfordvirae</taxon>
        <taxon>Preplasmiviricota</taxon>
        <taxon>Tectiliviricetes</taxon>
        <taxon>Rowavirales</taxon>
        <taxon>Adenoviridae</taxon>
        <taxon>Mastadenovirus</taxon>
        <taxon>Human mastadenovirus B</taxon>
    </lineage>
</organism>
<name>E321_ADE03</name>
<organismHost>
    <name type="scientific">Homo sapiens</name>
    <name type="common">Human</name>
    <dbReference type="NCBI Taxonomy" id="9606"/>
</organismHost>
<dbReference type="EMBL" id="M15952">
    <property type="protein sequence ID" value="AAA42485.1"/>
    <property type="molecule type" value="Genomic_DNA"/>
</dbReference>
<dbReference type="PIR" id="F29500">
    <property type="entry name" value="ERAD35"/>
</dbReference>
<dbReference type="SMR" id="P11322"/>
<dbReference type="InterPro" id="IPR003471">
    <property type="entry name" value="Adeno_E3_CR1"/>
</dbReference>
<dbReference type="InterPro" id="IPR003470">
    <property type="entry name" value="Adeno_E3_CR2"/>
</dbReference>
<dbReference type="Pfam" id="PF02440">
    <property type="entry name" value="Adeno_E3_CR1"/>
    <property type="match status" value="1"/>
</dbReference>
<dbReference type="Pfam" id="PF02439">
    <property type="entry name" value="Adeno_E3_CR2"/>
    <property type="match status" value="1"/>
</dbReference>
<comment type="function">
    <text>E3 proteins seem to be dispensable for virus growth in tissue culture cells. They are potentially important for virus growth under special conditions; E3 region may help adenoviruses to evade the immune surveillance of the host.</text>
</comment>
<comment type="similarity">
    <text evidence="2">Belongs to the adenoviridae E3_20 family.</text>
</comment>
<accession>P11322</accession>
<protein>
    <recommendedName>
        <fullName>Early E3 20.5 kDa glycoprotein</fullName>
    </recommendedName>
</protein>
<keyword id="KW-0244">Early protein</keyword>
<keyword id="KW-0325">Glycoprotein</keyword>
<evidence type="ECO:0000255" key="1"/>
<evidence type="ECO:0000305" key="2"/>